<name>KUP_STRPZ</name>
<reference key="1">
    <citation type="journal article" date="2008" name="J. Bacteriol.">
        <title>Genome sequence of a nephritogenic and highly transformable M49 strain of Streptococcus pyogenes.</title>
        <authorList>
            <person name="McShan W.M."/>
            <person name="Ferretti J.J."/>
            <person name="Karasawa T."/>
            <person name="Suvorov A.N."/>
            <person name="Lin S."/>
            <person name="Qin B."/>
            <person name="Jia H."/>
            <person name="Kenton S."/>
            <person name="Najar F."/>
            <person name="Wu H."/>
            <person name="Scott J."/>
            <person name="Roe B.A."/>
            <person name="Savic D.J."/>
        </authorList>
    </citation>
    <scope>NUCLEOTIDE SEQUENCE [LARGE SCALE GENOMIC DNA]</scope>
    <source>
        <strain>NZ131</strain>
    </source>
</reference>
<gene>
    <name evidence="1" type="primary">kup</name>
    <name type="ordered locus">Spy49_1130c</name>
</gene>
<evidence type="ECO:0000255" key="1">
    <source>
        <dbReference type="HAMAP-Rule" id="MF_01522"/>
    </source>
</evidence>
<feature type="chain" id="PRO_1000190286" description="Probable potassium transport system protein Kup">
    <location>
        <begin position="1"/>
        <end position="666"/>
    </location>
</feature>
<feature type="transmembrane region" description="Helical" evidence="1">
    <location>
        <begin position="16"/>
        <end position="36"/>
    </location>
</feature>
<feature type="transmembrane region" description="Helical" evidence="1">
    <location>
        <begin position="58"/>
        <end position="78"/>
    </location>
</feature>
<feature type="transmembrane region" description="Helical" evidence="1">
    <location>
        <begin position="100"/>
        <end position="120"/>
    </location>
</feature>
<feature type="transmembrane region" description="Helical" evidence="1">
    <location>
        <begin position="141"/>
        <end position="161"/>
    </location>
</feature>
<feature type="transmembrane region" description="Helical" evidence="1">
    <location>
        <begin position="165"/>
        <end position="185"/>
    </location>
</feature>
<feature type="transmembrane region" description="Helical" evidence="1">
    <location>
        <begin position="221"/>
        <end position="241"/>
    </location>
</feature>
<feature type="transmembrane region" description="Helical" evidence="1">
    <location>
        <begin position="253"/>
        <end position="273"/>
    </location>
</feature>
<feature type="transmembrane region" description="Helical" evidence="1">
    <location>
        <begin position="294"/>
        <end position="314"/>
    </location>
</feature>
<feature type="transmembrane region" description="Helical" evidence="1">
    <location>
        <begin position="343"/>
        <end position="363"/>
    </location>
</feature>
<feature type="transmembrane region" description="Helical" evidence="1">
    <location>
        <begin position="373"/>
        <end position="393"/>
    </location>
</feature>
<feature type="transmembrane region" description="Helical" evidence="1">
    <location>
        <begin position="399"/>
        <end position="419"/>
    </location>
</feature>
<feature type="transmembrane region" description="Helical" evidence="1">
    <location>
        <begin position="424"/>
        <end position="444"/>
    </location>
</feature>
<accession>B5XM58</accession>
<sequence>MSDSHLTAFDKASKAGFIIALGIVYGDIGTSPLYTMQSLVENQGGVNQVSESFILGSISLIIWTLTLITTIKYVLIALKADNHHEGGIFSLFTLVRKMSPWLIIPAMIGGATLLSDGALTPAVTVTSAIEGLKAVPGLSHIYQNQTNVIITTLVILIVLFGIQRFGTGFIGKIFGPVMFIWFSFLGVSGFFNTLGHLEIFKAINPYYALHLLFSPENHRGIFILGSIFLATTGAEALYSDLGHVGRGNIYVSWPFVKMCIVLSYCGQAAWILANKHSGIELNPFFASVPSQLRVYLVSLATLAAIIASQALISGSFTLVSEAMRLKIFPLFRVTYPGANLGQLYIPVINWILFAVTSCTVLAFRTSAHMEAAYGLAITITMLMTTILLKYYLIKKGTRPILAHLVMAFFALVEFIFFLASAIKFMHGGYAVVILALAIVFVMFIWHAGTRIVFKYVKSLNLNDYKEQIKQLRDDVCFDLYQTNVVYLSNRMQDHMIDRSILYSILDKRPKRAQVYWFVNVQVTDEPYTAKYKVDMVGTDYMVRVNLYLGFRMPQTVPRYLRTIVQDLMESGRLPKQEQEYTITPGRDVGDFRFVLIEERVSNARQLSNFERFIMHTKASIKHVTASPMRWFGLQYSEVTLEVVPLILSDILKLPIKELVPVEDSEA</sequence>
<proteinExistence type="inferred from homology"/>
<comment type="function">
    <text evidence="1">Transport of potassium into the cell. Likely operates as a K(+):H(+) symporter.</text>
</comment>
<comment type="catalytic activity">
    <reaction evidence="1">
        <text>K(+)(in) + H(+)(in) = K(+)(out) + H(+)(out)</text>
        <dbReference type="Rhea" id="RHEA:28490"/>
        <dbReference type="ChEBI" id="CHEBI:15378"/>
        <dbReference type="ChEBI" id="CHEBI:29103"/>
    </reaction>
    <physiologicalReaction direction="right-to-left" evidence="1">
        <dbReference type="Rhea" id="RHEA:28492"/>
    </physiologicalReaction>
</comment>
<comment type="subcellular location">
    <subcellularLocation>
        <location evidence="1">Cell membrane</location>
        <topology evidence="1">Multi-pass membrane protein</topology>
    </subcellularLocation>
</comment>
<comment type="similarity">
    <text evidence="1">Belongs to the HAK/KUP transporter (TC 2.A.72) family.</text>
</comment>
<protein>
    <recommendedName>
        <fullName evidence="1">Probable potassium transport system protein Kup</fullName>
    </recommendedName>
</protein>
<organism>
    <name type="scientific">Streptococcus pyogenes serotype M49 (strain NZ131)</name>
    <dbReference type="NCBI Taxonomy" id="471876"/>
    <lineage>
        <taxon>Bacteria</taxon>
        <taxon>Bacillati</taxon>
        <taxon>Bacillota</taxon>
        <taxon>Bacilli</taxon>
        <taxon>Lactobacillales</taxon>
        <taxon>Streptococcaceae</taxon>
        <taxon>Streptococcus</taxon>
    </lineage>
</organism>
<dbReference type="EMBL" id="CP000829">
    <property type="protein sequence ID" value="ACI61420.1"/>
    <property type="molecule type" value="Genomic_DNA"/>
</dbReference>
<dbReference type="KEGG" id="soz:Spy49_1130c"/>
<dbReference type="HOGENOM" id="CLU_008142_4_1_9"/>
<dbReference type="Proteomes" id="UP000001039">
    <property type="component" value="Chromosome"/>
</dbReference>
<dbReference type="GO" id="GO:0005886">
    <property type="term" value="C:plasma membrane"/>
    <property type="evidence" value="ECO:0007669"/>
    <property type="project" value="UniProtKB-SubCell"/>
</dbReference>
<dbReference type="GO" id="GO:0015079">
    <property type="term" value="F:potassium ion transmembrane transporter activity"/>
    <property type="evidence" value="ECO:0007669"/>
    <property type="project" value="UniProtKB-UniRule"/>
</dbReference>
<dbReference type="GO" id="GO:0015293">
    <property type="term" value="F:symporter activity"/>
    <property type="evidence" value="ECO:0007669"/>
    <property type="project" value="UniProtKB-UniRule"/>
</dbReference>
<dbReference type="HAMAP" id="MF_01522">
    <property type="entry name" value="Kup"/>
    <property type="match status" value="1"/>
</dbReference>
<dbReference type="InterPro" id="IPR003855">
    <property type="entry name" value="K+_transporter"/>
</dbReference>
<dbReference type="InterPro" id="IPR053952">
    <property type="entry name" value="K_trans_C"/>
</dbReference>
<dbReference type="InterPro" id="IPR053951">
    <property type="entry name" value="K_trans_N"/>
</dbReference>
<dbReference type="InterPro" id="IPR023051">
    <property type="entry name" value="Kup"/>
</dbReference>
<dbReference type="PANTHER" id="PTHR30540:SF83">
    <property type="entry name" value="K+ POTASSIUM TRANSPORTER"/>
    <property type="match status" value="1"/>
</dbReference>
<dbReference type="PANTHER" id="PTHR30540">
    <property type="entry name" value="OSMOTIC STRESS POTASSIUM TRANSPORTER"/>
    <property type="match status" value="1"/>
</dbReference>
<dbReference type="Pfam" id="PF02705">
    <property type="entry name" value="K_trans"/>
    <property type="match status" value="1"/>
</dbReference>
<dbReference type="Pfam" id="PF22776">
    <property type="entry name" value="K_trans_C"/>
    <property type="match status" value="1"/>
</dbReference>
<keyword id="KW-1003">Cell membrane</keyword>
<keyword id="KW-0406">Ion transport</keyword>
<keyword id="KW-0472">Membrane</keyword>
<keyword id="KW-0630">Potassium</keyword>
<keyword id="KW-0633">Potassium transport</keyword>
<keyword id="KW-0769">Symport</keyword>
<keyword id="KW-0812">Transmembrane</keyword>
<keyword id="KW-1133">Transmembrane helix</keyword>
<keyword id="KW-0813">Transport</keyword>